<dbReference type="EC" id="2.7.11.25"/>
<dbReference type="EMBL" id="AF117340">
    <property type="protein sequence ID" value="AAD25049.1"/>
    <property type="molecule type" value="mRNA"/>
</dbReference>
<dbReference type="EMBL" id="AB014614">
    <property type="protein sequence ID" value="BAA85878.1"/>
    <property type="molecule type" value="mRNA"/>
</dbReference>
<dbReference type="EMBL" id="L13103">
    <property type="protein sequence ID" value="AAA97500.1"/>
    <property type="status" value="ALT_INIT"/>
    <property type="molecule type" value="mRNA"/>
</dbReference>
<dbReference type="EMBL" id="U23470">
    <property type="protein sequence ID" value="AAA85038.1"/>
    <property type="molecule type" value="mRNA"/>
</dbReference>
<dbReference type="CCDS" id="CCDS26771.1"/>
<dbReference type="PIR" id="A46212">
    <property type="entry name" value="A46212"/>
</dbReference>
<dbReference type="SMR" id="P53349"/>
<dbReference type="CORUM" id="P53349"/>
<dbReference type="DIP" id="DIP-32487N"/>
<dbReference type="FunCoup" id="P53349">
    <property type="interactions" value="417"/>
</dbReference>
<dbReference type="IntAct" id="P53349">
    <property type="interactions" value="7"/>
</dbReference>
<dbReference type="MINT" id="P53349"/>
<dbReference type="STRING" id="10090.ENSMUSP00000104890"/>
<dbReference type="GlyGen" id="P53349">
    <property type="glycosylation" value="2 sites, 1 N-linked glycan (1 site)"/>
</dbReference>
<dbReference type="iPTMnet" id="P53349"/>
<dbReference type="PhosphoSitePlus" id="P53349"/>
<dbReference type="jPOST" id="P53349"/>
<dbReference type="PaxDb" id="10090-ENSMUSP00000104890"/>
<dbReference type="PeptideAtlas" id="P53349"/>
<dbReference type="ProteomicsDB" id="292161"/>
<dbReference type="AGR" id="MGI:1346872"/>
<dbReference type="MGI" id="MGI:1346872">
    <property type="gene designation" value="Map3k1"/>
</dbReference>
<dbReference type="eggNOG" id="KOG0198">
    <property type="taxonomic scope" value="Eukaryota"/>
</dbReference>
<dbReference type="InParanoid" id="P53349"/>
<dbReference type="PhylomeDB" id="P53349"/>
<dbReference type="BRENDA" id="2.7.11.25">
    <property type="organism ID" value="3474"/>
</dbReference>
<dbReference type="Reactome" id="R-MMU-166058">
    <property type="pathway name" value="MyD88:MAL(TIRAP) cascade initiated on plasma membrane"/>
</dbReference>
<dbReference type="Reactome" id="R-MMU-2871796">
    <property type="pathway name" value="FCERI mediated MAPK activation"/>
</dbReference>
<dbReference type="Reactome" id="R-MMU-975138">
    <property type="pathway name" value="TRAF6 mediated induction of NFkB and MAP kinases upon TLR7/8 or 9 activation"/>
</dbReference>
<dbReference type="Reactome" id="R-MMU-975871">
    <property type="pathway name" value="MyD88 cascade initiated on plasma membrane"/>
</dbReference>
<dbReference type="ChiTaRS" id="Map3k1">
    <property type="organism name" value="mouse"/>
</dbReference>
<dbReference type="PRO" id="PR:P53349"/>
<dbReference type="Proteomes" id="UP000000589">
    <property type="component" value="Unplaced"/>
</dbReference>
<dbReference type="RNAct" id="P53349">
    <property type="molecule type" value="protein"/>
</dbReference>
<dbReference type="GO" id="GO:0005829">
    <property type="term" value="C:cytosol"/>
    <property type="evidence" value="ECO:0000304"/>
    <property type="project" value="Reactome"/>
</dbReference>
<dbReference type="GO" id="GO:0031941">
    <property type="term" value="C:filamentous actin"/>
    <property type="evidence" value="ECO:0000314"/>
    <property type="project" value="MGI"/>
</dbReference>
<dbReference type="GO" id="GO:0070160">
    <property type="term" value="C:tight junction"/>
    <property type="evidence" value="ECO:0000266"/>
    <property type="project" value="MGI"/>
</dbReference>
<dbReference type="GO" id="GO:0005524">
    <property type="term" value="F:ATP binding"/>
    <property type="evidence" value="ECO:0007669"/>
    <property type="project" value="UniProtKB-KW"/>
</dbReference>
<dbReference type="GO" id="GO:0008092">
    <property type="term" value="F:cytoskeletal protein binding"/>
    <property type="evidence" value="ECO:0000314"/>
    <property type="project" value="MGI"/>
</dbReference>
<dbReference type="GO" id="GO:0004706">
    <property type="term" value="F:JUN kinase kinase kinase activity"/>
    <property type="evidence" value="ECO:0000314"/>
    <property type="project" value="MGI"/>
</dbReference>
<dbReference type="GO" id="GO:0004708">
    <property type="term" value="F:MAP kinase kinase activity"/>
    <property type="evidence" value="ECO:0000269"/>
    <property type="project" value="Reactome"/>
</dbReference>
<dbReference type="GO" id="GO:0004672">
    <property type="term" value="F:protein kinase activity"/>
    <property type="evidence" value="ECO:0000266"/>
    <property type="project" value="MGI"/>
</dbReference>
<dbReference type="GO" id="GO:0106310">
    <property type="term" value="F:protein serine kinase activity"/>
    <property type="evidence" value="ECO:0007669"/>
    <property type="project" value="RHEA"/>
</dbReference>
<dbReference type="GO" id="GO:0008270">
    <property type="term" value="F:zinc ion binding"/>
    <property type="evidence" value="ECO:0007669"/>
    <property type="project" value="UniProtKB-KW"/>
</dbReference>
<dbReference type="GO" id="GO:0008637">
    <property type="term" value="P:apoptotic mitochondrial changes"/>
    <property type="evidence" value="ECO:0000315"/>
    <property type="project" value="MGI"/>
</dbReference>
<dbReference type="GO" id="GO:0043010">
    <property type="term" value="P:camera-type eye development"/>
    <property type="evidence" value="ECO:0000315"/>
    <property type="project" value="MGI"/>
</dbReference>
<dbReference type="GO" id="GO:0003382">
    <property type="term" value="P:epithelial cell morphogenesis"/>
    <property type="evidence" value="ECO:0000315"/>
    <property type="project" value="MGI"/>
</dbReference>
<dbReference type="GO" id="GO:0061029">
    <property type="term" value="P:eyelid development in camera-type eye"/>
    <property type="evidence" value="ECO:0000315"/>
    <property type="project" value="MGI"/>
</dbReference>
<dbReference type="GO" id="GO:0007254">
    <property type="term" value="P:JNK cascade"/>
    <property type="evidence" value="ECO:0000314"/>
    <property type="project" value="BHF-UCL"/>
</dbReference>
<dbReference type="GO" id="GO:0002011">
    <property type="term" value="P:morphogenesis of an epithelial sheet"/>
    <property type="evidence" value="ECO:0000315"/>
    <property type="project" value="MGI"/>
</dbReference>
<dbReference type="GO" id="GO:0030838">
    <property type="term" value="P:positive regulation of actin filament polymerization"/>
    <property type="evidence" value="ECO:0000315"/>
    <property type="project" value="MGI"/>
</dbReference>
<dbReference type="GO" id="GO:0030334">
    <property type="term" value="P:regulation of cell migration"/>
    <property type="evidence" value="ECO:0000315"/>
    <property type="project" value="MGI"/>
</dbReference>
<dbReference type="GO" id="GO:0007179">
    <property type="term" value="P:transforming growth factor beta receptor signaling pathway"/>
    <property type="evidence" value="ECO:0000315"/>
    <property type="project" value="MGI"/>
</dbReference>
<dbReference type="GO" id="GO:0042060">
    <property type="term" value="P:wound healing"/>
    <property type="evidence" value="ECO:0000315"/>
    <property type="project" value="MGI"/>
</dbReference>
<dbReference type="CDD" id="cd16494">
    <property type="entry name" value="RING-CH-C4HC3_ZSWM2"/>
    <property type="match status" value="1"/>
</dbReference>
<dbReference type="CDD" id="cd06630">
    <property type="entry name" value="STKc_MEKK1"/>
    <property type="match status" value="1"/>
</dbReference>
<dbReference type="FunFam" id="1.10.510.10:FF:000286">
    <property type="entry name" value="Mitogen-activated protein kinase kinase kinase 1 (Predicted)"/>
    <property type="match status" value="1"/>
</dbReference>
<dbReference type="FunFam" id="1.25.10.10:FF:000122">
    <property type="entry name" value="Mitogen-activated protein kinase kinase kinase 1 (Predicted)"/>
    <property type="match status" value="1"/>
</dbReference>
<dbReference type="FunFam" id="3.30.40.10:FF:000223">
    <property type="entry name" value="Mitogen-activated protein kinase kinase kinase 1 (Predicted)"/>
    <property type="match status" value="1"/>
</dbReference>
<dbReference type="Gene3D" id="1.25.10.10">
    <property type="entry name" value="Leucine-rich Repeat Variant"/>
    <property type="match status" value="1"/>
</dbReference>
<dbReference type="Gene3D" id="1.10.510.10">
    <property type="entry name" value="Transferase(Phosphotransferase) domain 1"/>
    <property type="match status" value="1"/>
</dbReference>
<dbReference type="Gene3D" id="3.30.40.10">
    <property type="entry name" value="Zinc/RING finger domain, C3HC4 (zinc finger)"/>
    <property type="match status" value="1"/>
</dbReference>
<dbReference type="InterPro" id="IPR011989">
    <property type="entry name" value="ARM-like"/>
</dbReference>
<dbReference type="InterPro" id="IPR016024">
    <property type="entry name" value="ARM-type_fold"/>
</dbReference>
<dbReference type="InterPro" id="IPR011009">
    <property type="entry name" value="Kinase-like_dom_sf"/>
</dbReference>
<dbReference type="InterPro" id="IPR000719">
    <property type="entry name" value="Prot_kinase_dom"/>
</dbReference>
<dbReference type="InterPro" id="IPR017441">
    <property type="entry name" value="Protein_kinase_ATP_BS"/>
</dbReference>
<dbReference type="InterPro" id="IPR008271">
    <property type="entry name" value="Ser/Thr_kinase_AS"/>
</dbReference>
<dbReference type="InterPro" id="IPR001841">
    <property type="entry name" value="Znf_RING"/>
</dbReference>
<dbReference type="InterPro" id="IPR013083">
    <property type="entry name" value="Znf_RING/FYVE/PHD"/>
</dbReference>
<dbReference type="InterPro" id="IPR007527">
    <property type="entry name" value="Znf_SWIM"/>
</dbReference>
<dbReference type="PANTHER" id="PTHR11584:SF369">
    <property type="entry name" value="MITOGEN-ACTIVATED PROTEIN KINASE KINASE KINASE 19-RELATED"/>
    <property type="match status" value="1"/>
</dbReference>
<dbReference type="PANTHER" id="PTHR11584">
    <property type="entry name" value="SERINE/THREONINE PROTEIN KINASE"/>
    <property type="match status" value="1"/>
</dbReference>
<dbReference type="Pfam" id="PF21040">
    <property type="entry name" value="CEP104-like_TOG"/>
    <property type="match status" value="1"/>
</dbReference>
<dbReference type="Pfam" id="PF00069">
    <property type="entry name" value="Pkinase"/>
    <property type="match status" value="1"/>
</dbReference>
<dbReference type="Pfam" id="PF04434">
    <property type="entry name" value="SWIM"/>
    <property type="match status" value="1"/>
</dbReference>
<dbReference type="SMART" id="SM00220">
    <property type="entry name" value="S_TKc"/>
    <property type="match status" value="1"/>
</dbReference>
<dbReference type="SUPFAM" id="SSF48371">
    <property type="entry name" value="ARM repeat"/>
    <property type="match status" value="1"/>
</dbReference>
<dbReference type="SUPFAM" id="SSF56112">
    <property type="entry name" value="Protein kinase-like (PK-like)"/>
    <property type="match status" value="1"/>
</dbReference>
<dbReference type="SUPFAM" id="SSF57850">
    <property type="entry name" value="RING/U-box"/>
    <property type="match status" value="1"/>
</dbReference>
<dbReference type="PROSITE" id="PS00107">
    <property type="entry name" value="PROTEIN_KINASE_ATP"/>
    <property type="match status" value="1"/>
</dbReference>
<dbReference type="PROSITE" id="PS50011">
    <property type="entry name" value="PROTEIN_KINASE_DOM"/>
    <property type="match status" value="1"/>
</dbReference>
<dbReference type="PROSITE" id="PS00108">
    <property type="entry name" value="PROTEIN_KINASE_ST"/>
    <property type="match status" value="1"/>
</dbReference>
<dbReference type="PROSITE" id="PS50089">
    <property type="entry name" value="ZF_RING_2"/>
    <property type="match status" value="1"/>
</dbReference>
<dbReference type="PROSITE" id="PS50966">
    <property type="entry name" value="ZF_SWIM"/>
    <property type="match status" value="1"/>
</dbReference>
<proteinExistence type="evidence at protein level"/>
<sequence length="1493" mass="161289">MAAAAGDRASSSGFPGAAAASPEAGGGGGGGGALQGSGAPAAGAAGLLREPGSAGRERADWRRRQLRKVRSVELDQLPEQPLFLAAASPPCPSTSPSPEPADAAAGASRFQPAAGPPPPGAASRCGSHSAELAAARDSGARSPAGAEPPSAAAPSGREMENKETLKGLHKMEDRPEERMIREKLKATCMPAWKHEWLERRNRRGPVVVKPIPIKGDGSEVNNLAAEPQGEGQAGSAAPAPKGRRSPSPGSSPSGRSVKPESPGVRRKRVSPVPFQSGRITPPRRAPSPDGFSPYSPEETSRRVNKVMRARLYLLQQIGPNSFLIGGDSPDNKYRVFIGPQNCSCGRGAFCIHLLFVMLRVFQLEPSDPMLWRKTLKNFEVESLFQKYHSRRSSRIKAPSRNTIQKFVSRMSNSHTLSSSSTSTSSSENSIKDEEEQMCPICLLGMLDEESLTVCEDGCRNKLHHHCMSIWAEECRRNREPLICPLCRSKWRSHDFYSHELSSPVESPASLRAVQQPSSPQQPVAGSQRRNQESSFNLTHFGTQQIPSAYKDLAEPWIQVFGMELVGCLFSRNWNVREMALRRLSHDVSGALLLANGESTGNSGGGSGGSLSAGAASGSSQPSISGDVVEACCSVLSIVCADPVYKVYVAALKTLRAMLVYTPCHSLAERIKLQRLLRPVVDTILVKCADANSRTSQLSISTVLELCKGQAGELAVGREILKAGSIGVGGVDYVLSCILGNQAESNNWQELLGRLCLIDRLLLEFPAEFYPHIVSTDVSQAEPVEIRYKKLLSLLTFALQSIDNSHSMVGKLSRRIYLSSARMVTAVPAVFSKLVTMLNASGSTHFTRMRRRLMAIADEVEIAEVIQLGVEDTVDGHQDSLQAVAPTSCLENSSLEHTVHREKTGKGLSATRLSASSEDISDRLAGVSVGLPSSTTTEQPKPAVQTKGRPHSQCLNSSPLSHAQLMFPAPSAPCSSAPSVPDISKHRPQAFVPCKIPSASPQTQRKFSLQFQRNCSEHRDSDQLSPVFTQSRPPPSSNIHRPKPSRPVPGSTSKLGDATKSSMTLDLGSASRCDDSFGGGGNSGNAVIPSDETVFTPVEDKCRLDVNTELNSSIEDLLEASMPSSDTTVTFKSEVAVLSPEKAENDDTYKDDVNHNQKCKEKMEAEEEEALAIAMAMSASQDALPIVPQLQVENGEDIIIIQQDTPETLPGHTKAKQPYREDAEWLKGQQIGLGAFSSCYQAQDVGTGTLMAVKQVTYVRNTSSEQEEVVEALREEIRMMGHLNHPNIIRMLGATCEKSNYNLFIEWMAGGSVAHLLSKYGAFKESVVINYTEQLLRGLSYLHENQIIHRDVKGANLLIDSTGQRLRIADFGAAARLASKGTGAGEFQGQLLGTIAFMAPEVLRGQQYGRSCDVWSVGCAIIEMACAKPPWNAEKHSNHLALIFKIASATTAPSIPSHLSPGLRDVAVRCLELQPQDRPPSRELLKHPVFRTTW</sequence>
<protein>
    <recommendedName>
        <fullName>Mitogen-activated protein kinase kinase kinase 1</fullName>
        <ecNumber>2.7.11.25</ecNumber>
    </recommendedName>
    <alternativeName>
        <fullName>MAPK/ERK kinase kinase 1</fullName>
        <shortName>MEK kinase 1</shortName>
        <shortName>MEKK 1</shortName>
    </alternativeName>
</protein>
<accession>P53349</accession>
<accession>Q60831</accession>
<accession>Q9R0U3</accession>
<accession>Q9R256</accession>
<evidence type="ECO:0000250" key="1">
    <source>
        <dbReference type="UniProtKB" id="Q13233"/>
    </source>
</evidence>
<evidence type="ECO:0000250" key="2">
    <source>
        <dbReference type="UniProtKB" id="Q62925"/>
    </source>
</evidence>
<evidence type="ECO:0000255" key="3">
    <source>
        <dbReference type="PROSITE-ProRule" id="PRU00159"/>
    </source>
</evidence>
<evidence type="ECO:0000255" key="4">
    <source>
        <dbReference type="PROSITE-ProRule" id="PRU00175"/>
    </source>
</evidence>
<evidence type="ECO:0000255" key="5">
    <source>
        <dbReference type="PROSITE-ProRule" id="PRU00325"/>
    </source>
</evidence>
<evidence type="ECO:0000255" key="6">
    <source>
        <dbReference type="PROSITE-ProRule" id="PRU10027"/>
    </source>
</evidence>
<evidence type="ECO:0000256" key="7">
    <source>
        <dbReference type="SAM" id="MobiDB-lite"/>
    </source>
</evidence>
<evidence type="ECO:0000269" key="8">
    <source>
    </source>
</evidence>
<evidence type="ECO:0000269" key="9">
    <source>
    </source>
</evidence>
<evidence type="ECO:0000269" key="10">
    <source>
    </source>
</evidence>
<evidence type="ECO:0000305" key="11"/>
<evidence type="ECO:0007744" key="12">
    <source>
    </source>
</evidence>
<evidence type="ECO:0007744" key="13">
    <source>
    </source>
</evidence>
<comment type="function">
    <text evidence="8 9">Component of a protein kinase signal transduction cascade (PubMed:14500727). Activates the ERK and JNK kinase pathways by phosphorylation of MAP2K1 and MAP2K4 (PubMed:14500727). May phosphorylate the MAPK8/JNK1 kinase (PubMed:17761173). Activates CHUK and IKBKB, the central protein kinases of the NF-kappa-B pathway (PubMed:14500727).</text>
</comment>
<comment type="catalytic activity">
    <reaction>
        <text>L-seryl-[protein] + ATP = O-phospho-L-seryl-[protein] + ADP + H(+)</text>
        <dbReference type="Rhea" id="RHEA:17989"/>
        <dbReference type="Rhea" id="RHEA-COMP:9863"/>
        <dbReference type="Rhea" id="RHEA-COMP:11604"/>
        <dbReference type="ChEBI" id="CHEBI:15378"/>
        <dbReference type="ChEBI" id="CHEBI:29999"/>
        <dbReference type="ChEBI" id="CHEBI:30616"/>
        <dbReference type="ChEBI" id="CHEBI:83421"/>
        <dbReference type="ChEBI" id="CHEBI:456216"/>
        <dbReference type="EC" id="2.7.11.25"/>
    </reaction>
</comment>
<comment type="catalytic activity">
    <reaction>
        <text>L-threonyl-[protein] + ATP = O-phospho-L-threonyl-[protein] + ADP + H(+)</text>
        <dbReference type="Rhea" id="RHEA:46608"/>
        <dbReference type="Rhea" id="RHEA-COMP:11060"/>
        <dbReference type="Rhea" id="RHEA-COMP:11605"/>
        <dbReference type="ChEBI" id="CHEBI:15378"/>
        <dbReference type="ChEBI" id="CHEBI:30013"/>
        <dbReference type="ChEBI" id="CHEBI:30616"/>
        <dbReference type="ChEBI" id="CHEBI:61977"/>
        <dbReference type="ChEBI" id="CHEBI:456216"/>
        <dbReference type="EC" id="2.7.11.25"/>
    </reaction>
</comment>
<comment type="cofactor">
    <cofactor>
        <name>Mg(2+)</name>
        <dbReference type="ChEBI" id="CHEBI:18420"/>
    </cofactor>
</comment>
<comment type="activity regulation">
    <text evidence="8 10">Activated by autophosphorylation on Thr-1381 and Thr-1393 following oligomerization.</text>
</comment>
<comment type="subunit">
    <text evidence="1 2">Binds both upstream activators and downstream substrates in multimolecular complexes through its N-terminus. Oligomerizes after binding MAP4K2 or TRAF2. Interacts with AXIN1. Interacts (via the kinase catalytic domain) with STK38 (By similarity). Interacts with GRIPAP1 (By similarity).</text>
</comment>
<comment type="interaction">
    <interactant intactId="EBI-447913">
        <id>P53349</id>
    </interactant>
    <interactant intactId="EBI-447934">
        <id>P47809</id>
        <label>Map2k4</label>
    </interactant>
    <organismsDiffer>false</organismsDiffer>
    <experiments>2</experiments>
</comment>
<comment type="interaction">
    <interactant intactId="EBI-447913">
        <id>P53349</id>
    </interactant>
    <interactant intactId="EBI-9549291">
        <id>Q9ESN9-2</id>
        <label>Mapk8ip3</label>
    </interactant>
    <organismsDiffer>false</organismsDiffer>
    <experiments>3</experiments>
</comment>
<comment type="interaction">
    <interactant intactId="EBI-447913">
        <id>P53349</id>
    </interactant>
    <interactant intactId="EBI-1778503">
        <id>Q8CF89</id>
        <label>Tab1</label>
    </interactant>
    <organismsDiffer>false</organismsDiffer>
    <experiments>4</experiments>
</comment>
<comment type="interaction">
    <interactant intactId="EBI-447913">
        <id>P53349</id>
    </interactant>
    <interactant intactId="EBI-413074">
        <id>P62991</id>
        <label>Ubc</label>
    </interactant>
    <organismsDiffer>false</organismsDiffer>
    <experiments>2</experiments>
</comment>
<comment type="tissue specificity">
    <text>Highly expressed in the heart and spleen while a lower level expression is seen in the liver.</text>
</comment>
<comment type="PTM">
    <text evidence="10">Autophosphorylated.</text>
</comment>
<comment type="similarity">
    <text evidence="11">Belongs to the protein kinase superfamily. STE Ser/Thr protein kinase family. MAP kinase kinase kinase subfamily.</text>
</comment>
<comment type="sequence caution" evidence="11">
    <conflict type="erroneous initiation">
        <sequence resource="EMBL-CDS" id="AAA97500"/>
    </conflict>
</comment>
<keyword id="KW-0007">Acetylation</keyword>
<keyword id="KW-0067">ATP-binding</keyword>
<keyword id="KW-0418">Kinase</keyword>
<keyword id="KW-0460">Magnesium</keyword>
<keyword id="KW-0479">Metal-binding</keyword>
<keyword id="KW-0547">Nucleotide-binding</keyword>
<keyword id="KW-0597">Phosphoprotein</keyword>
<keyword id="KW-1185">Reference proteome</keyword>
<keyword id="KW-0723">Serine/threonine-protein kinase</keyword>
<keyword id="KW-0808">Transferase</keyword>
<keyword id="KW-0862">Zinc</keyword>
<keyword id="KW-0863">Zinc-finger</keyword>
<reference key="1">
    <citation type="submission" date="1998-12" db="EMBL/GenBank/DDBJ databases">
        <authorList>
            <person name="Lange C.A."/>
            <person name="Blumer K.J."/>
            <person name="Sather S.L."/>
            <person name="Johnson G.L."/>
        </authorList>
    </citation>
    <scope>NUCLEOTIDE SEQUENCE [MRNA]</scope>
</reference>
<reference key="2">
    <citation type="journal article" date="1999" name="Mol. Cell. Biol.">
        <title>JSAP1, a novel jun N-terminal protein kinase (JNK)-binding protein that functions as a scaffold factor in the JNK signaling pathway.</title>
        <authorList>
            <person name="Ito M."/>
            <person name="Yoshioka K."/>
            <person name="Akechi M."/>
            <person name="Yamashita S."/>
            <person name="Takamatsu N."/>
            <person name="Sugiyama K."/>
            <person name="Hibi M."/>
            <person name="Nakabeppu Y."/>
            <person name="Shiba T."/>
            <person name="Yamamoto K."/>
        </authorList>
    </citation>
    <scope>NUCLEOTIDE SEQUENCE [MRNA] OF 1-659</scope>
    <source>
        <tissue>Spleen</tissue>
    </source>
</reference>
<reference key="3">
    <citation type="journal article" date="1993" name="Science">
        <title>A divergence in the MAP kinase regulatory network defined by MEK kinase and Raf.</title>
        <authorList>
            <person name="Lange-Carter C.A."/>
            <person name="Pleiman C.M."/>
            <person name="Gardner A.M."/>
            <person name="Blumer K.J."/>
            <person name="Johnson G.L."/>
        </authorList>
    </citation>
    <scope>NUCLEOTIDE SEQUENCE [MRNA] OF 660-1493</scope>
    <source>
        <strain>BALB/cJ</strain>
        <tissue>Brain</tissue>
    </source>
</reference>
<reference key="4">
    <citation type="submission" date="1996-01" db="EMBL/GenBank/DDBJ databases">
        <authorList>
            <person name="Whitmarsh A.J."/>
            <person name="Shore P."/>
            <person name="Sharrocks A.D."/>
            <person name="Davis R.J."/>
        </authorList>
    </citation>
    <scope>NUCLEOTIDE SEQUENCE [MRNA] OF 796-1493</scope>
    <source>
        <strain>BALB/cJ</strain>
        <tissue>Heart</tissue>
    </source>
</reference>
<reference key="5">
    <citation type="journal article" date="1997" name="Biochem. J.">
        <title>Regulation of the activity of MEK kinase 1 (MEKK1) by autophosphorylation within the kinase activation domain.</title>
        <authorList>
            <person name="Deak J.C."/>
            <person name="Templeton D.J."/>
        </authorList>
    </citation>
    <scope>ACTIVITY REGULATION</scope>
    <scope>MUTAGENESIS OF THR-1381 AND THR-1393</scope>
    <scope>PHOSPHORYLATION AT THR-1381 AND THR-1393</scope>
</reference>
<reference key="6">
    <citation type="journal article" date="2003" name="J. Biol. Chem.">
        <title>Subdomain VIII is a specificity-determining region in MEKK1.</title>
        <authorList>
            <person name="Tu Z."/>
            <person name="Lee F.S."/>
        </authorList>
    </citation>
    <scope>FUNCTION</scope>
    <scope>INTERACTION WITH IKBKB AND MAP2K4</scope>
    <scope>ACTIVITY REGULATION</scope>
    <scope>MUTAGENESIS OF THR-1381; THR-1393; ILE-1394; PHE-1396; MET-1397; VAL-1401; LEU-1402; ARG-1403 AND GLY-1404</scope>
</reference>
<reference key="7">
    <citation type="journal article" date="2004" name="J. Biol. Chem.">
        <title>The DIX domain protein coiled-coil-DIX1 inhibits c-Jun N-terminal kinase activation by Axin and dishevelled through distinct mechanisms.</title>
        <authorList>
            <person name="Wong C.K."/>
            <person name="Luo W."/>
            <person name="Deng Y."/>
            <person name="Zou H."/>
            <person name="Ye Z."/>
            <person name="Lin S.-C."/>
        </authorList>
    </citation>
    <scope>INTERACTION WITH AXIN1</scope>
</reference>
<reference key="8">
    <citation type="journal article" date="2007" name="FEBS Lett.">
        <title>GRASP-1 is a neuronal scaffold protein for the JNK signaling pathway.</title>
        <authorList>
            <person name="Ye B."/>
            <person name="Yu W.P."/>
            <person name="Thomas G.M."/>
            <person name="Huganir R.L."/>
        </authorList>
    </citation>
    <scope>FUNCTION</scope>
</reference>
<reference key="9">
    <citation type="journal article" date="2009" name="Immunity">
        <title>The phagosomal proteome in interferon-gamma-activated macrophages.</title>
        <authorList>
            <person name="Trost M."/>
            <person name="English L."/>
            <person name="Lemieux S."/>
            <person name="Courcelles M."/>
            <person name="Desjardins M."/>
            <person name="Thibault P."/>
        </authorList>
    </citation>
    <scope>PHOSPHORYLATION [LARGE SCALE ANALYSIS] AT SER-142</scope>
    <scope>IDENTIFICATION BY MASS SPECTROMETRY [LARGE SCALE ANALYSIS]</scope>
</reference>
<reference key="10">
    <citation type="journal article" date="2010" name="Cell">
        <title>A tissue-specific atlas of mouse protein phosphorylation and expression.</title>
        <authorList>
            <person name="Huttlin E.L."/>
            <person name="Jedrychowski M.P."/>
            <person name="Elias J.E."/>
            <person name="Goswami T."/>
            <person name="Rad R."/>
            <person name="Beausoleil S.A."/>
            <person name="Villen J."/>
            <person name="Haas W."/>
            <person name="Sowa M.E."/>
            <person name="Gygi S.P."/>
        </authorList>
    </citation>
    <scope>PHOSPHORYLATION [LARGE SCALE ANALYSIS] AT SER-142 AND SER-287</scope>
    <scope>IDENTIFICATION BY MASS SPECTROMETRY [LARGE SCALE ANALYSIS]</scope>
    <source>
        <tissue>Brown adipose tissue</tissue>
        <tissue>Lung</tissue>
        <tissue>Spleen</tissue>
    </source>
</reference>
<feature type="initiator methionine" description="Removed" evidence="1">
    <location>
        <position position="1"/>
    </location>
</feature>
<feature type="chain" id="PRO_0000086241" description="Mitogen-activated protein kinase kinase kinase 1">
    <location>
        <begin position="2"/>
        <end position="1493"/>
    </location>
</feature>
<feature type="domain" description="Protein kinase" evidence="3">
    <location>
        <begin position="1224"/>
        <end position="1489"/>
    </location>
</feature>
<feature type="zinc finger region" description="SWIM-type" evidence="5">
    <location>
        <begin position="333"/>
        <end position="361"/>
    </location>
</feature>
<feature type="zinc finger region" description="RING-type" evidence="4">
    <location>
        <begin position="438"/>
        <end position="487"/>
    </location>
</feature>
<feature type="region of interest" description="Disordered" evidence="7">
    <location>
        <begin position="1"/>
        <end position="178"/>
    </location>
</feature>
<feature type="region of interest" description="Disordered" evidence="7">
    <location>
        <begin position="194"/>
        <end position="300"/>
    </location>
</feature>
<feature type="region of interest" description="Disordered" evidence="7">
    <location>
        <begin position="411"/>
        <end position="431"/>
    </location>
</feature>
<feature type="region of interest" description="Disordered" evidence="7">
    <location>
        <begin position="506"/>
        <end position="531"/>
    </location>
</feature>
<feature type="region of interest" description="Disordered" evidence="7">
    <location>
        <begin position="895"/>
        <end position="914"/>
    </location>
</feature>
<feature type="region of interest" description="Disordered" evidence="7">
    <location>
        <begin position="927"/>
        <end position="957"/>
    </location>
</feature>
<feature type="region of interest" description="Disordered" evidence="7">
    <location>
        <begin position="992"/>
        <end position="1066"/>
    </location>
</feature>
<feature type="compositionally biased region" description="Low complexity" evidence="7">
    <location>
        <begin position="1"/>
        <end position="23"/>
    </location>
</feature>
<feature type="compositionally biased region" description="Gly residues" evidence="7">
    <location>
        <begin position="24"/>
        <end position="35"/>
    </location>
</feature>
<feature type="compositionally biased region" description="Low complexity" evidence="7">
    <location>
        <begin position="36"/>
        <end position="46"/>
    </location>
</feature>
<feature type="compositionally biased region" description="Pro residues" evidence="7">
    <location>
        <begin position="89"/>
        <end position="99"/>
    </location>
</feature>
<feature type="compositionally biased region" description="Low complexity" evidence="7">
    <location>
        <begin position="140"/>
        <end position="156"/>
    </location>
</feature>
<feature type="compositionally biased region" description="Basic and acidic residues" evidence="7">
    <location>
        <begin position="157"/>
        <end position="178"/>
    </location>
</feature>
<feature type="compositionally biased region" description="Low complexity" evidence="7">
    <location>
        <begin position="235"/>
        <end position="256"/>
    </location>
</feature>
<feature type="compositionally biased region" description="Low complexity" evidence="7">
    <location>
        <begin position="411"/>
        <end position="428"/>
    </location>
</feature>
<feature type="compositionally biased region" description="Low complexity" evidence="7">
    <location>
        <begin position="512"/>
        <end position="527"/>
    </location>
</feature>
<feature type="compositionally biased region" description="Polar residues" evidence="7">
    <location>
        <begin position="998"/>
        <end position="1013"/>
    </location>
</feature>
<feature type="compositionally biased region" description="Polar residues" evidence="7">
    <location>
        <begin position="1049"/>
        <end position="1063"/>
    </location>
</feature>
<feature type="active site" description="Proton acceptor" evidence="3 6">
    <location>
        <position position="1350"/>
    </location>
</feature>
<feature type="binding site" evidence="3">
    <location>
        <begin position="1230"/>
        <end position="1238"/>
    </location>
    <ligand>
        <name>ATP</name>
        <dbReference type="ChEBI" id="CHEBI:30616"/>
    </ligand>
</feature>
<feature type="binding site" evidence="3">
    <location>
        <position position="1253"/>
    </location>
    <ligand>
        <name>ATP</name>
        <dbReference type="ChEBI" id="CHEBI:30616"/>
    </ligand>
</feature>
<feature type="modified residue" description="N-acetylalanine" evidence="1">
    <location>
        <position position="2"/>
    </location>
</feature>
<feature type="modified residue" description="Phosphoserine" evidence="1">
    <location>
        <position position="21"/>
    </location>
</feature>
<feature type="modified residue" description="Phosphoserine" evidence="12 13">
    <location>
        <position position="142"/>
    </location>
</feature>
<feature type="modified residue" description="Phosphoserine" evidence="1">
    <location>
        <position position="270"/>
    </location>
</feature>
<feature type="modified residue" description="Phosphothreonine" evidence="1">
    <location>
        <position position="280"/>
    </location>
</feature>
<feature type="modified residue" description="Phosphoserine" evidence="13">
    <location>
        <position position="287"/>
    </location>
</feature>
<feature type="modified residue" description="Phosphoserine" evidence="1">
    <location>
        <position position="292"/>
    </location>
</feature>
<feature type="modified residue" description="Phosphoserine" evidence="1">
    <location>
        <position position="295"/>
    </location>
</feature>
<feature type="modified residue" description="Phosphoserine" evidence="1">
    <location>
        <position position="502"/>
    </location>
</feature>
<feature type="modified residue" description="Phosphoserine" evidence="1">
    <location>
        <position position="526"/>
    </location>
</feature>
<feature type="modified residue" description="Phosphoserine" evidence="1">
    <location>
        <position position="915"/>
    </location>
</feature>
<feature type="modified residue" description="Phosphoserine" evidence="1">
    <location>
        <position position="999"/>
    </location>
</feature>
<feature type="modified residue" description="Phosphoserine" evidence="1">
    <location>
        <position position="1024"/>
    </location>
</feature>
<feature type="modified residue" description="Phosphothreonine; by autocatalysis" evidence="10">
    <location>
        <position position="1381"/>
    </location>
</feature>
<feature type="modified residue" description="Phosphothreonine; by autocatalysis" evidence="10">
    <location>
        <position position="1393"/>
    </location>
</feature>
<feature type="mutagenesis site" description="Fails to activate MAP2K1, MAP2K4, MAP2K7, CHUK and IKBKB." evidence="8 10">
    <original>T</original>
    <variation>A</variation>
    <location>
        <position position="1381"/>
    </location>
</feature>
<feature type="mutagenesis site" description="Loss of kinase activity and autophosphorylation." evidence="8 10">
    <original>T</original>
    <variation>E</variation>
    <location>
        <position position="1381"/>
    </location>
</feature>
<feature type="mutagenesis site" description="Reduced kinase activity and autophosphorylation." evidence="8 10">
    <original>T</original>
    <variation>S</variation>
    <location>
        <position position="1381"/>
    </location>
</feature>
<feature type="mutagenesis site" description="Loss of kinase activity and autophosphorylation. Fails to activate MAP2K1, MAP2K4, MAP2K7, CHUK and IKBKB." evidence="8 10">
    <original>T</original>
    <variation>A</variation>
    <location>
        <position position="1393"/>
    </location>
</feature>
<feature type="mutagenesis site" description="Loss of kinase activity and autophosphorylation." evidence="8 10">
    <original>T</original>
    <variation>E</variation>
    <location>
        <position position="1393"/>
    </location>
</feature>
<feature type="mutagenesis site" description="Reduced kinase activity and autophosphorylation." evidence="8 10">
    <original>T</original>
    <variation>S</variation>
    <location>
        <position position="1393"/>
    </location>
</feature>
<feature type="mutagenesis site" description="Loss of NF-kappa-B transcription factor activity and reduced ability to activate MAP2K1, MAP2K4, MAP2K7. No effect on AP-1 activity or activation of CHUK and IKBKB. Loss of binding to IKBKB." evidence="8">
    <original>I</original>
    <variation>A</variation>
    <location>
        <position position="1394"/>
    </location>
</feature>
<feature type="mutagenesis site" description="Loss of AP-1 and NF-kappa-B transcription factor activity. Reduced ability to activate MAP2K1, MAP2K4, MAP2K7, CHUK and IKBKB." evidence="8">
    <original>F</original>
    <variation>A</variation>
    <location>
        <position position="1396"/>
    </location>
</feature>
<feature type="mutagenesis site" description="Loss of AP-1 and NF-kappa-B transcription factor activity. Reduced ability to activate MAP2K1, MAP2K4, MAP2K7, CHUK and IKBKB." evidence="8">
    <original>M</original>
    <variation>A</variation>
    <location>
        <position position="1397"/>
    </location>
</feature>
<feature type="mutagenesis site" description="Loss of AP-1 and NF-kappa-B transcription factor activity. Reduced ability to activate MAP2K1, MAP2K4, MAP2K7, CHUK and IKBKB." evidence="8">
    <original>V</original>
    <variation>A</variation>
    <location>
        <position position="1401"/>
    </location>
</feature>
<feature type="mutagenesis site" description="Loss of AP-1 transcription factor activity and reduced ability to activate CHUK and IKBKB. No effect on NF-kappa-B activity or activation of MAP2K1, MAP2K4, MAP2K7. Loss of binding to MAP2K4." evidence="8">
    <original>L</original>
    <variation>A</variation>
    <location>
        <position position="1402"/>
    </location>
</feature>
<feature type="mutagenesis site" description="Loss of AP-1 transcription factor activity, no effect on NF-kappa-B activity." evidence="8">
    <original>R</original>
    <variation>A</variation>
    <location>
        <position position="1403"/>
    </location>
</feature>
<feature type="mutagenesis site" description="Loss of AP-1 and NF-kappa-B transcription factor activity." evidence="8">
    <original>G</original>
    <variation>A</variation>
    <location>
        <position position="1404"/>
    </location>
</feature>
<feature type="sequence conflict" description="In Ref. 2." evidence="11" ref="2">
    <original>GGGALQGSGA</original>
    <variation>ALQGSG</variation>
    <location>
        <begin position="30"/>
        <end position="39"/>
    </location>
</feature>
<feature type="sequence conflict" description="In Ref. 2; BAA85878." evidence="11" ref="2">
    <location>
        <position position="103"/>
    </location>
</feature>
<feature type="sequence conflict" description="In Ref. 2; BAA85878." evidence="11" ref="2">
    <original>V</original>
    <variation>E</variation>
    <location>
        <position position="257"/>
    </location>
</feature>
<feature type="sequence conflict" description="In Ref. 2; BAA85878." evidence="11" ref="2">
    <original>M</original>
    <variation>V</variation>
    <location>
        <position position="307"/>
    </location>
</feature>
<feature type="sequence conflict" description="In Ref. 2; BAA85878." evidence="11" ref="2">
    <original>S</original>
    <variation>C</variation>
    <location>
        <position position="413"/>
    </location>
</feature>
<feature type="sequence conflict" description="In Ref. 2; BAA85878." evidence="11" ref="2">
    <original>V</original>
    <variation>A</variation>
    <location>
        <position position="559"/>
    </location>
</feature>
<feature type="sequence conflict" description="In Ref. 3; AAA85038." evidence="11" ref="3">
    <original>V</original>
    <variation>L</variation>
    <location>
        <position position="883"/>
    </location>
</feature>
<feature type="sequence conflict" description="In Ref. 3; AAA85038." evidence="11" ref="3">
    <original>V</original>
    <variation>L</variation>
    <location>
        <position position="1467"/>
    </location>
</feature>
<organism>
    <name type="scientific">Mus musculus</name>
    <name type="common">Mouse</name>
    <dbReference type="NCBI Taxonomy" id="10090"/>
    <lineage>
        <taxon>Eukaryota</taxon>
        <taxon>Metazoa</taxon>
        <taxon>Chordata</taxon>
        <taxon>Craniata</taxon>
        <taxon>Vertebrata</taxon>
        <taxon>Euteleostomi</taxon>
        <taxon>Mammalia</taxon>
        <taxon>Eutheria</taxon>
        <taxon>Euarchontoglires</taxon>
        <taxon>Glires</taxon>
        <taxon>Rodentia</taxon>
        <taxon>Myomorpha</taxon>
        <taxon>Muroidea</taxon>
        <taxon>Muridae</taxon>
        <taxon>Murinae</taxon>
        <taxon>Mus</taxon>
        <taxon>Mus</taxon>
    </lineage>
</organism>
<gene>
    <name type="primary">Map3k1</name>
    <name type="synonym">Mekk</name>
    <name type="synonym">Mekk1</name>
</gene>
<name>M3K1_MOUSE</name>